<accession>Q48F73</accession>
<proteinExistence type="inferred from homology"/>
<comment type="function">
    <text evidence="1">Endonuclease that specifically degrades the RNA of RNA-DNA hybrids.</text>
</comment>
<comment type="catalytic activity">
    <reaction evidence="1">
        <text>Endonucleolytic cleavage to 5'-phosphomonoester.</text>
        <dbReference type="EC" id="3.1.26.4"/>
    </reaction>
</comment>
<comment type="cofactor">
    <cofactor evidence="1">
        <name>Mn(2+)</name>
        <dbReference type="ChEBI" id="CHEBI:29035"/>
    </cofactor>
    <cofactor evidence="1">
        <name>Mg(2+)</name>
        <dbReference type="ChEBI" id="CHEBI:18420"/>
    </cofactor>
    <text evidence="1">Manganese or magnesium. Binds 1 divalent metal ion per monomer in the absence of substrate. May bind a second metal ion after substrate binding.</text>
</comment>
<comment type="subcellular location">
    <subcellularLocation>
        <location evidence="1">Cytoplasm</location>
    </subcellularLocation>
</comment>
<comment type="similarity">
    <text evidence="1">Belongs to the RNase HII family.</text>
</comment>
<sequence>MRSPIMQTGLDFTLVEDLVAGVDEVGRGPLCGAVVTAAVILDPARPILGLNDSKKLTEARREKLYVEIQEKALCWFIARAEVEEIDQLNILHATMLAMKRAVEGLSITPKLALIDGNRCPQLSVPSAPVVKGDSRVPAIAAASILAKVSRDREMAAFELIYPGYGIGGHKGYPTPVHLEALARLGPTPIHRRSFAPVRAAHEARASIMIGGSIPLPVGLLQD</sequence>
<evidence type="ECO:0000255" key="1">
    <source>
        <dbReference type="HAMAP-Rule" id="MF_00052"/>
    </source>
</evidence>
<evidence type="ECO:0000255" key="2">
    <source>
        <dbReference type="PROSITE-ProRule" id="PRU01319"/>
    </source>
</evidence>
<keyword id="KW-0963">Cytoplasm</keyword>
<keyword id="KW-0255">Endonuclease</keyword>
<keyword id="KW-0378">Hydrolase</keyword>
<keyword id="KW-0464">Manganese</keyword>
<keyword id="KW-0479">Metal-binding</keyword>
<keyword id="KW-0540">Nuclease</keyword>
<dbReference type="EC" id="3.1.26.4" evidence="1"/>
<dbReference type="EMBL" id="CP000058">
    <property type="protein sequence ID" value="AAZ37839.1"/>
    <property type="molecule type" value="Genomic_DNA"/>
</dbReference>
<dbReference type="SMR" id="Q48F73"/>
<dbReference type="KEGG" id="psp:PSPPH_3826"/>
<dbReference type="eggNOG" id="COG0164">
    <property type="taxonomic scope" value="Bacteria"/>
</dbReference>
<dbReference type="HOGENOM" id="CLU_036532_3_2_6"/>
<dbReference type="Proteomes" id="UP000000551">
    <property type="component" value="Chromosome"/>
</dbReference>
<dbReference type="GO" id="GO:0005737">
    <property type="term" value="C:cytoplasm"/>
    <property type="evidence" value="ECO:0007669"/>
    <property type="project" value="UniProtKB-SubCell"/>
</dbReference>
<dbReference type="GO" id="GO:0032299">
    <property type="term" value="C:ribonuclease H2 complex"/>
    <property type="evidence" value="ECO:0007669"/>
    <property type="project" value="TreeGrafter"/>
</dbReference>
<dbReference type="GO" id="GO:0030145">
    <property type="term" value="F:manganese ion binding"/>
    <property type="evidence" value="ECO:0007669"/>
    <property type="project" value="UniProtKB-UniRule"/>
</dbReference>
<dbReference type="GO" id="GO:0003723">
    <property type="term" value="F:RNA binding"/>
    <property type="evidence" value="ECO:0007669"/>
    <property type="project" value="InterPro"/>
</dbReference>
<dbReference type="GO" id="GO:0004523">
    <property type="term" value="F:RNA-DNA hybrid ribonuclease activity"/>
    <property type="evidence" value="ECO:0007669"/>
    <property type="project" value="UniProtKB-UniRule"/>
</dbReference>
<dbReference type="GO" id="GO:0043137">
    <property type="term" value="P:DNA replication, removal of RNA primer"/>
    <property type="evidence" value="ECO:0007669"/>
    <property type="project" value="TreeGrafter"/>
</dbReference>
<dbReference type="GO" id="GO:0006298">
    <property type="term" value="P:mismatch repair"/>
    <property type="evidence" value="ECO:0007669"/>
    <property type="project" value="TreeGrafter"/>
</dbReference>
<dbReference type="CDD" id="cd07182">
    <property type="entry name" value="RNase_HII_bacteria_HII_like"/>
    <property type="match status" value="1"/>
</dbReference>
<dbReference type="FunFam" id="3.30.420.10:FF:000006">
    <property type="entry name" value="Ribonuclease HII"/>
    <property type="match status" value="1"/>
</dbReference>
<dbReference type="Gene3D" id="3.30.420.10">
    <property type="entry name" value="Ribonuclease H-like superfamily/Ribonuclease H"/>
    <property type="match status" value="1"/>
</dbReference>
<dbReference type="HAMAP" id="MF_00052_B">
    <property type="entry name" value="RNase_HII_B"/>
    <property type="match status" value="1"/>
</dbReference>
<dbReference type="InterPro" id="IPR022898">
    <property type="entry name" value="RNase_HII"/>
</dbReference>
<dbReference type="InterPro" id="IPR001352">
    <property type="entry name" value="RNase_HII/HIII"/>
</dbReference>
<dbReference type="InterPro" id="IPR024567">
    <property type="entry name" value="RNase_HII/HIII_dom"/>
</dbReference>
<dbReference type="InterPro" id="IPR012337">
    <property type="entry name" value="RNaseH-like_sf"/>
</dbReference>
<dbReference type="InterPro" id="IPR036397">
    <property type="entry name" value="RNaseH_sf"/>
</dbReference>
<dbReference type="NCBIfam" id="NF000595">
    <property type="entry name" value="PRK00015.1-3"/>
    <property type="match status" value="1"/>
</dbReference>
<dbReference type="NCBIfam" id="NF000596">
    <property type="entry name" value="PRK00015.1-4"/>
    <property type="match status" value="1"/>
</dbReference>
<dbReference type="PANTHER" id="PTHR10954">
    <property type="entry name" value="RIBONUCLEASE H2 SUBUNIT A"/>
    <property type="match status" value="1"/>
</dbReference>
<dbReference type="PANTHER" id="PTHR10954:SF18">
    <property type="entry name" value="RIBONUCLEASE HII"/>
    <property type="match status" value="1"/>
</dbReference>
<dbReference type="Pfam" id="PF01351">
    <property type="entry name" value="RNase_HII"/>
    <property type="match status" value="1"/>
</dbReference>
<dbReference type="SUPFAM" id="SSF53098">
    <property type="entry name" value="Ribonuclease H-like"/>
    <property type="match status" value="1"/>
</dbReference>
<dbReference type="PROSITE" id="PS51975">
    <property type="entry name" value="RNASE_H_2"/>
    <property type="match status" value="1"/>
</dbReference>
<name>RNH2_PSE14</name>
<gene>
    <name evidence="1" type="primary">rnhB</name>
    <name type="ordered locus">PSPPH_3826</name>
</gene>
<reference key="1">
    <citation type="journal article" date="2005" name="J. Bacteriol.">
        <title>Whole-genome sequence analysis of Pseudomonas syringae pv. phaseolicola 1448A reveals divergence among pathovars in genes involved in virulence and transposition.</title>
        <authorList>
            <person name="Joardar V."/>
            <person name="Lindeberg M."/>
            <person name="Jackson R.W."/>
            <person name="Selengut J."/>
            <person name="Dodson R."/>
            <person name="Brinkac L.M."/>
            <person name="Daugherty S.C."/>
            <person name="DeBoy R.T."/>
            <person name="Durkin A.S."/>
            <person name="Gwinn Giglio M."/>
            <person name="Madupu R."/>
            <person name="Nelson W.C."/>
            <person name="Rosovitz M.J."/>
            <person name="Sullivan S.A."/>
            <person name="Crabtree J."/>
            <person name="Creasy T."/>
            <person name="Davidsen T.M."/>
            <person name="Haft D.H."/>
            <person name="Zafar N."/>
            <person name="Zhou L."/>
            <person name="Halpin R."/>
            <person name="Holley T."/>
            <person name="Khouri H.M."/>
            <person name="Feldblyum T.V."/>
            <person name="White O."/>
            <person name="Fraser C.M."/>
            <person name="Chatterjee A.K."/>
            <person name="Cartinhour S."/>
            <person name="Schneider D."/>
            <person name="Mansfield J.W."/>
            <person name="Collmer A."/>
            <person name="Buell R."/>
        </authorList>
    </citation>
    <scope>NUCLEOTIDE SEQUENCE [LARGE SCALE GENOMIC DNA]</scope>
    <source>
        <strain>1448A / Race 6</strain>
    </source>
</reference>
<feature type="chain" id="PRO_0000235755" description="Ribonuclease HII">
    <location>
        <begin position="1"/>
        <end position="222"/>
    </location>
</feature>
<feature type="domain" description="RNase H type-2" evidence="2">
    <location>
        <begin position="17"/>
        <end position="206"/>
    </location>
</feature>
<feature type="binding site" evidence="1">
    <location>
        <position position="23"/>
    </location>
    <ligand>
        <name>a divalent metal cation</name>
        <dbReference type="ChEBI" id="CHEBI:60240"/>
    </ligand>
</feature>
<feature type="binding site" evidence="1">
    <location>
        <position position="24"/>
    </location>
    <ligand>
        <name>a divalent metal cation</name>
        <dbReference type="ChEBI" id="CHEBI:60240"/>
    </ligand>
</feature>
<feature type="binding site" evidence="1">
    <location>
        <position position="115"/>
    </location>
    <ligand>
        <name>a divalent metal cation</name>
        <dbReference type="ChEBI" id="CHEBI:60240"/>
    </ligand>
</feature>
<protein>
    <recommendedName>
        <fullName evidence="1">Ribonuclease HII</fullName>
        <shortName evidence="1">RNase HII</shortName>
        <ecNumber evidence="1">3.1.26.4</ecNumber>
    </recommendedName>
</protein>
<organism>
    <name type="scientific">Pseudomonas savastanoi pv. phaseolicola (strain 1448A / Race 6)</name>
    <name type="common">Pseudomonas syringae pv. phaseolicola (strain 1448A / Race 6)</name>
    <dbReference type="NCBI Taxonomy" id="264730"/>
    <lineage>
        <taxon>Bacteria</taxon>
        <taxon>Pseudomonadati</taxon>
        <taxon>Pseudomonadota</taxon>
        <taxon>Gammaproteobacteria</taxon>
        <taxon>Pseudomonadales</taxon>
        <taxon>Pseudomonadaceae</taxon>
        <taxon>Pseudomonas</taxon>
    </lineage>
</organism>